<gene>
    <name type="primary">tpi-1</name>
    <name type="ORF">Y17G7B.7</name>
</gene>
<sequence>MTRKFFVGGNWKMNGDYASVDGIVTFLNASADNSSVDVVVAPPAPYLAYAKSKLKAGVLVAAQNCYKVPKGAFTGEISPAMIKDLGLEWVILGHSERRHVFGESDALIAEKTVHALEAGIKVVFCIGEKLEEREAGHTKDVNFRQLQAIVDKGVSWENIVIAYEPVWAIGTGKTASGEQAQEVHEWIRAFLKEKVSPAVADATRIIYGGSVTADNAAELGKKPDIDGFLVGGASLKPDFVKIINARS</sequence>
<accession>Q10657</accession>
<accession>Q9U2R2</accession>
<evidence type="ECO:0000250" key="1">
    <source>
        <dbReference type="UniProtKB" id="P00939"/>
    </source>
</evidence>
<evidence type="ECO:0000255" key="2">
    <source>
        <dbReference type="PROSITE-ProRule" id="PRU10127"/>
    </source>
</evidence>
<evidence type="ECO:0000269" key="3">
    <source>
    </source>
</evidence>
<evidence type="ECO:0000305" key="4"/>
<evidence type="ECO:0007829" key="5">
    <source>
        <dbReference type="PDB" id="1MO0"/>
    </source>
</evidence>
<comment type="function">
    <text evidence="1">Triosephosphate isomerase is an extremely efficient metabolic enzyme that catalyzes the interconversion between dihydroxyacetone phosphate (DHAP) and D-glyceraldehyde-3-phosphate (G3P) in glycolysis and gluconeogenesis.</text>
</comment>
<comment type="function">
    <text evidence="1">It is also responsible for the non-negligible production of methylglyoxal a reactive cytotoxic side-product that modifies and can alter proteins, DNA and lipids.</text>
</comment>
<comment type="catalytic activity">
    <reaction evidence="2">
        <text>D-glyceraldehyde 3-phosphate = dihydroxyacetone phosphate</text>
        <dbReference type="Rhea" id="RHEA:18585"/>
        <dbReference type="ChEBI" id="CHEBI:57642"/>
        <dbReference type="ChEBI" id="CHEBI:59776"/>
        <dbReference type="EC" id="5.3.1.1"/>
    </reaction>
</comment>
<comment type="catalytic activity">
    <reaction evidence="1">
        <text>dihydroxyacetone phosphate = methylglyoxal + phosphate</text>
        <dbReference type="Rhea" id="RHEA:17937"/>
        <dbReference type="ChEBI" id="CHEBI:17158"/>
        <dbReference type="ChEBI" id="CHEBI:43474"/>
        <dbReference type="ChEBI" id="CHEBI:57642"/>
        <dbReference type="EC" id="4.2.3.3"/>
    </reaction>
</comment>
<comment type="pathway">
    <text evidence="2">Carbohydrate biosynthesis; gluconeogenesis.</text>
</comment>
<comment type="pathway">
    <text evidence="2">Carbohydrate degradation; glycolysis; D-glyceraldehyde 3-phosphate from glycerone phosphate: step 1/1.</text>
</comment>
<comment type="subunit">
    <text evidence="2 3">Homodimer.</text>
</comment>
<comment type="subcellular location">
    <subcellularLocation>
        <location evidence="2">Cytoplasm</location>
    </subcellularLocation>
</comment>
<comment type="similarity">
    <text evidence="4">Belongs to the triosephosphate isomerase family.</text>
</comment>
<organism>
    <name type="scientific">Caenorhabditis elegans</name>
    <dbReference type="NCBI Taxonomy" id="6239"/>
    <lineage>
        <taxon>Eukaryota</taxon>
        <taxon>Metazoa</taxon>
        <taxon>Ecdysozoa</taxon>
        <taxon>Nematoda</taxon>
        <taxon>Chromadorea</taxon>
        <taxon>Rhabditida</taxon>
        <taxon>Rhabditina</taxon>
        <taxon>Rhabditomorpha</taxon>
        <taxon>Rhabditoidea</taxon>
        <taxon>Rhabditidae</taxon>
        <taxon>Peloderinae</taxon>
        <taxon>Caenorhabditis</taxon>
    </lineage>
</organism>
<keyword id="KW-0002">3D-structure</keyword>
<keyword id="KW-0963">Cytoplasm</keyword>
<keyword id="KW-0312">Gluconeogenesis</keyword>
<keyword id="KW-0324">Glycolysis</keyword>
<keyword id="KW-0413">Isomerase</keyword>
<keyword id="KW-0456">Lyase</keyword>
<keyword id="KW-1185">Reference proteome</keyword>
<reference key="1">
    <citation type="journal article" date="1995" name="Proc. Natl. Acad. Sci. U.S.A.">
        <title>Seven newly discovered intron positions in the triose-phosphate isomerase gene: evidence for the introns-late theory.</title>
        <authorList>
            <person name="Logsdon J.M. Jr."/>
            <person name="Tyshenko M.G."/>
            <person name="Dixon C."/>
            <person name="D-Jafari J."/>
            <person name="Walker V.K."/>
            <person name="Palmer J.D."/>
        </authorList>
    </citation>
    <scope>NUCLEOTIDE SEQUENCE [GENOMIC DNA]</scope>
</reference>
<reference key="2">
    <citation type="journal article" date="1998" name="Science">
        <title>Genome sequence of the nematode C. elegans: a platform for investigating biology.</title>
        <authorList>
            <consortium name="The C. elegans sequencing consortium"/>
        </authorList>
    </citation>
    <scope>NUCLEOTIDE SEQUENCE [LARGE SCALE GENOMIC DNA]</scope>
    <source>
        <strain>Bristol N2</strain>
    </source>
</reference>
<reference key="3">
    <citation type="journal article" date="2003" name="Proteins">
        <title>Structural genomics of Caenorhabditis elegans: triosephosphate isomerase.</title>
        <authorList>
            <person name="Symersky J."/>
            <person name="Li S."/>
            <person name="Carson M."/>
            <person name="Luo M."/>
        </authorList>
    </citation>
    <scope>X-RAY CRYSTALLOGRAPHY (1.7 ANGSTROMS) OF 2-247</scope>
    <scope>HOMODIMERIZATION</scope>
</reference>
<protein>
    <recommendedName>
        <fullName>Triosephosphate isomerase</fullName>
        <shortName>TIM</shortName>
        <ecNumber evidence="2">5.3.1.1</ecNumber>
    </recommendedName>
    <alternativeName>
        <fullName evidence="1">Methylglyoxal synthase</fullName>
        <ecNumber evidence="1">4.2.3.3</ecNumber>
    </alternativeName>
    <alternativeName>
        <fullName>Triose-phosphate isomerase</fullName>
    </alternativeName>
</protein>
<proteinExistence type="evidence at protein level"/>
<dbReference type="EC" id="5.3.1.1" evidence="2"/>
<dbReference type="EC" id="4.2.3.3" evidence="1"/>
<dbReference type="EMBL" id="U23081">
    <property type="protein sequence ID" value="AAA79846.1"/>
    <property type="molecule type" value="Genomic_DNA"/>
</dbReference>
<dbReference type="EMBL" id="AL023828">
    <property type="protein sequence ID" value="CAA19447.1"/>
    <property type="molecule type" value="Genomic_DNA"/>
</dbReference>
<dbReference type="PIR" id="T26493">
    <property type="entry name" value="T26493"/>
</dbReference>
<dbReference type="RefSeq" id="NP_001366651.1">
    <property type="nucleotide sequence ID" value="NM_001381623.3"/>
</dbReference>
<dbReference type="RefSeq" id="NP_496563.1">
    <property type="nucleotide sequence ID" value="NM_064162.4"/>
</dbReference>
<dbReference type="PDB" id="1MO0">
    <property type="method" value="X-ray"/>
    <property type="resolution" value="1.70 A"/>
    <property type="chains" value="A/B=2-247"/>
</dbReference>
<dbReference type="PDBsum" id="1MO0"/>
<dbReference type="SMR" id="Q10657"/>
<dbReference type="BioGRID" id="40148">
    <property type="interactions" value="54"/>
</dbReference>
<dbReference type="FunCoup" id="Q10657">
    <property type="interactions" value="1159"/>
</dbReference>
<dbReference type="STRING" id="6239.Y17G7B.7.1"/>
<dbReference type="PaxDb" id="6239-Y17G7B.7"/>
<dbReference type="PeptideAtlas" id="Q10657"/>
<dbReference type="EnsemblMetazoa" id="Y17G7B.7.1">
    <property type="protein sequence ID" value="Y17G7B.7.1"/>
    <property type="gene ID" value="WBGene00006601"/>
</dbReference>
<dbReference type="GeneID" id="174844"/>
<dbReference type="UCSC" id="Y17G7B.7.1">
    <property type="organism name" value="c. elegans"/>
</dbReference>
<dbReference type="AGR" id="WB:WBGene00006601"/>
<dbReference type="WormBase" id="Y17G7B.7">
    <property type="protein sequence ID" value="CE19040"/>
    <property type="gene ID" value="WBGene00006601"/>
    <property type="gene designation" value="tpi-1"/>
</dbReference>
<dbReference type="eggNOG" id="KOG1643">
    <property type="taxonomic scope" value="Eukaryota"/>
</dbReference>
<dbReference type="GeneTree" id="ENSGT00390000013354"/>
<dbReference type="HOGENOM" id="CLU_024251_2_0_1"/>
<dbReference type="InParanoid" id="Q10657"/>
<dbReference type="OMA" id="NWKMHMT"/>
<dbReference type="OrthoDB" id="6715177at2759"/>
<dbReference type="PhylomeDB" id="Q10657"/>
<dbReference type="BRENDA" id="5.3.1.1">
    <property type="organism ID" value="1045"/>
</dbReference>
<dbReference type="Reactome" id="R-CEL-70171">
    <property type="pathway name" value="Glycolysis"/>
</dbReference>
<dbReference type="Reactome" id="R-CEL-70263">
    <property type="pathway name" value="Gluconeogenesis"/>
</dbReference>
<dbReference type="UniPathway" id="UPA00109">
    <property type="reaction ID" value="UER00189"/>
</dbReference>
<dbReference type="UniPathway" id="UPA00138"/>
<dbReference type="EvolutionaryTrace" id="Q10657"/>
<dbReference type="PRO" id="PR:Q10657"/>
<dbReference type="Proteomes" id="UP000001940">
    <property type="component" value="Chromosome II"/>
</dbReference>
<dbReference type="Bgee" id="WBGene00006601">
    <property type="expression patterns" value="Expressed in adult organism and 4 other cell types or tissues"/>
</dbReference>
<dbReference type="GO" id="GO:0005829">
    <property type="term" value="C:cytosol"/>
    <property type="evidence" value="ECO:0000318"/>
    <property type="project" value="GO_Central"/>
</dbReference>
<dbReference type="GO" id="GO:0030016">
    <property type="term" value="C:myofibril"/>
    <property type="evidence" value="ECO:0007005"/>
    <property type="project" value="WormBase"/>
</dbReference>
<dbReference type="GO" id="GO:0008929">
    <property type="term" value="F:methylglyoxal synthase activity"/>
    <property type="evidence" value="ECO:0007669"/>
    <property type="project" value="UniProtKB-EC"/>
</dbReference>
<dbReference type="GO" id="GO:0004807">
    <property type="term" value="F:triose-phosphate isomerase activity"/>
    <property type="evidence" value="ECO:0000318"/>
    <property type="project" value="GO_Central"/>
</dbReference>
<dbReference type="GO" id="GO:0045454">
    <property type="term" value="P:cell redox homeostasis"/>
    <property type="evidence" value="ECO:0000315"/>
    <property type="project" value="WormBase"/>
</dbReference>
<dbReference type="GO" id="GO:0008340">
    <property type="term" value="P:determination of adult lifespan"/>
    <property type="evidence" value="ECO:0000315"/>
    <property type="project" value="WormBase"/>
</dbReference>
<dbReference type="GO" id="GO:0006094">
    <property type="term" value="P:gluconeogenesis"/>
    <property type="evidence" value="ECO:0000318"/>
    <property type="project" value="GO_Central"/>
</dbReference>
<dbReference type="GO" id="GO:0046166">
    <property type="term" value="P:glyceraldehyde-3-phosphate biosynthetic process"/>
    <property type="evidence" value="ECO:0000318"/>
    <property type="project" value="GO_Central"/>
</dbReference>
<dbReference type="GO" id="GO:0019563">
    <property type="term" value="P:glycerol catabolic process"/>
    <property type="evidence" value="ECO:0000318"/>
    <property type="project" value="GO_Central"/>
</dbReference>
<dbReference type="GO" id="GO:0006096">
    <property type="term" value="P:glycolytic process"/>
    <property type="evidence" value="ECO:0000318"/>
    <property type="project" value="GO_Central"/>
</dbReference>
<dbReference type="CDD" id="cd00311">
    <property type="entry name" value="TIM"/>
    <property type="match status" value="1"/>
</dbReference>
<dbReference type="FunFam" id="3.20.20.70:FF:000025">
    <property type="entry name" value="Triosephosphate isomerase"/>
    <property type="match status" value="1"/>
</dbReference>
<dbReference type="Gene3D" id="3.20.20.70">
    <property type="entry name" value="Aldolase class I"/>
    <property type="match status" value="1"/>
</dbReference>
<dbReference type="HAMAP" id="MF_00147_B">
    <property type="entry name" value="TIM_B"/>
    <property type="match status" value="1"/>
</dbReference>
<dbReference type="InterPro" id="IPR013785">
    <property type="entry name" value="Aldolase_TIM"/>
</dbReference>
<dbReference type="InterPro" id="IPR035990">
    <property type="entry name" value="TIM_sf"/>
</dbReference>
<dbReference type="InterPro" id="IPR022896">
    <property type="entry name" value="TrioseP_Isoase_bac/euk"/>
</dbReference>
<dbReference type="InterPro" id="IPR000652">
    <property type="entry name" value="Triosephosphate_isomerase"/>
</dbReference>
<dbReference type="InterPro" id="IPR020861">
    <property type="entry name" value="Triosephosphate_isomerase_AS"/>
</dbReference>
<dbReference type="NCBIfam" id="TIGR00419">
    <property type="entry name" value="tim"/>
    <property type="match status" value="1"/>
</dbReference>
<dbReference type="PANTHER" id="PTHR21139">
    <property type="entry name" value="TRIOSEPHOSPHATE ISOMERASE"/>
    <property type="match status" value="1"/>
</dbReference>
<dbReference type="PANTHER" id="PTHR21139:SF2">
    <property type="entry name" value="TRIOSEPHOSPHATE ISOMERASE"/>
    <property type="match status" value="1"/>
</dbReference>
<dbReference type="Pfam" id="PF00121">
    <property type="entry name" value="TIM"/>
    <property type="match status" value="1"/>
</dbReference>
<dbReference type="SUPFAM" id="SSF51351">
    <property type="entry name" value="Triosephosphate isomerase (TIM)"/>
    <property type="match status" value="1"/>
</dbReference>
<dbReference type="PROSITE" id="PS00171">
    <property type="entry name" value="TIM_1"/>
    <property type="match status" value="1"/>
</dbReference>
<dbReference type="PROSITE" id="PS51440">
    <property type="entry name" value="TIM_2"/>
    <property type="match status" value="1"/>
</dbReference>
<name>TPIS_CAEEL</name>
<feature type="chain" id="PRO_0000090127" description="Triosephosphate isomerase">
    <location>
        <begin position="1"/>
        <end position="247"/>
    </location>
</feature>
<feature type="active site" description="Electrophile" evidence="2">
    <location>
        <position position="94"/>
    </location>
</feature>
<feature type="active site" description="Proton acceptor" evidence="2">
    <location>
        <position position="164"/>
    </location>
</feature>
<feature type="binding site" evidence="2">
    <location>
        <position position="10"/>
    </location>
    <ligand>
        <name>substrate</name>
    </ligand>
</feature>
<feature type="binding site" evidence="2">
    <location>
        <position position="12"/>
    </location>
    <ligand>
        <name>substrate</name>
    </ligand>
</feature>
<feature type="sequence conflict" description="In Ref. 1; AAA79846." evidence="4" ref="1">
    <original>EL</original>
    <variation>DV</variation>
    <location>
        <begin position="218"/>
        <end position="219"/>
    </location>
</feature>
<feature type="strand" evidence="5">
    <location>
        <begin position="5"/>
        <end position="10"/>
    </location>
</feature>
<feature type="helix" evidence="5">
    <location>
        <begin position="17"/>
        <end position="29"/>
    </location>
</feature>
<feature type="strand" evidence="5">
    <location>
        <begin position="36"/>
        <end position="41"/>
    </location>
</feature>
<feature type="helix" evidence="5">
    <location>
        <begin position="44"/>
        <end position="46"/>
    </location>
</feature>
<feature type="helix" evidence="5">
    <location>
        <begin position="47"/>
        <end position="53"/>
    </location>
</feature>
<feature type="strand" evidence="5">
    <location>
        <begin position="58"/>
        <end position="63"/>
    </location>
</feature>
<feature type="strand" evidence="5">
    <location>
        <begin position="67"/>
        <end position="72"/>
    </location>
</feature>
<feature type="helix" evidence="5">
    <location>
        <begin position="79"/>
        <end position="84"/>
    </location>
</feature>
<feature type="strand" evidence="5">
    <location>
        <begin position="89"/>
        <end position="93"/>
    </location>
</feature>
<feature type="helix" evidence="5">
    <location>
        <begin position="95"/>
        <end position="99"/>
    </location>
</feature>
<feature type="helix" evidence="5">
    <location>
        <begin position="105"/>
        <end position="117"/>
    </location>
</feature>
<feature type="strand" evidence="5">
    <location>
        <begin position="121"/>
        <end position="126"/>
    </location>
</feature>
<feature type="helix" evidence="5">
    <location>
        <begin position="130"/>
        <end position="134"/>
    </location>
</feature>
<feature type="helix" evidence="5">
    <location>
        <begin position="138"/>
        <end position="150"/>
    </location>
</feature>
<feature type="turn" evidence="5">
    <location>
        <begin position="151"/>
        <end position="153"/>
    </location>
</feature>
<feature type="strand" evidence="5">
    <location>
        <begin position="159"/>
        <end position="163"/>
    </location>
</feature>
<feature type="helix" evidence="5">
    <location>
        <begin position="166"/>
        <end position="168"/>
    </location>
</feature>
<feature type="turn" evidence="5">
    <location>
        <begin position="169"/>
        <end position="171"/>
    </location>
</feature>
<feature type="helix" evidence="5">
    <location>
        <begin position="177"/>
        <end position="194"/>
    </location>
</feature>
<feature type="helix" evidence="5">
    <location>
        <begin position="197"/>
        <end position="202"/>
    </location>
</feature>
<feature type="strand" evidence="5">
    <location>
        <begin position="205"/>
        <end position="210"/>
    </location>
</feature>
<feature type="turn" evidence="5">
    <location>
        <begin position="213"/>
        <end position="215"/>
    </location>
</feature>
<feature type="helix" evidence="5">
    <location>
        <begin position="216"/>
        <end position="219"/>
    </location>
</feature>
<feature type="strand" evidence="5">
    <location>
        <begin position="227"/>
        <end position="231"/>
    </location>
</feature>
<feature type="helix" evidence="5">
    <location>
        <begin position="232"/>
        <end position="235"/>
    </location>
</feature>
<feature type="helix" evidence="5">
    <location>
        <begin position="238"/>
        <end position="246"/>
    </location>
</feature>